<reference key="1">
    <citation type="journal article" date="2013" name="Nature">
        <title>The zebrafish reference genome sequence and its relationship to the human genome.</title>
        <authorList>
            <person name="Howe K."/>
            <person name="Clark M.D."/>
            <person name="Torroja C.F."/>
            <person name="Torrance J."/>
            <person name="Berthelot C."/>
            <person name="Muffato M."/>
            <person name="Collins J.E."/>
            <person name="Humphray S."/>
            <person name="McLaren K."/>
            <person name="Matthews L."/>
            <person name="McLaren S."/>
            <person name="Sealy I."/>
            <person name="Caccamo M."/>
            <person name="Churcher C."/>
            <person name="Scott C."/>
            <person name="Barrett J.C."/>
            <person name="Koch R."/>
            <person name="Rauch G.J."/>
            <person name="White S."/>
            <person name="Chow W."/>
            <person name="Kilian B."/>
            <person name="Quintais L.T."/>
            <person name="Guerra-Assuncao J.A."/>
            <person name="Zhou Y."/>
            <person name="Gu Y."/>
            <person name="Yen J."/>
            <person name="Vogel J.H."/>
            <person name="Eyre T."/>
            <person name="Redmond S."/>
            <person name="Banerjee R."/>
            <person name="Chi J."/>
            <person name="Fu B."/>
            <person name="Langley E."/>
            <person name="Maguire S.F."/>
            <person name="Laird G.K."/>
            <person name="Lloyd D."/>
            <person name="Kenyon E."/>
            <person name="Donaldson S."/>
            <person name="Sehra H."/>
            <person name="Almeida-King J."/>
            <person name="Loveland J."/>
            <person name="Trevanion S."/>
            <person name="Jones M."/>
            <person name="Quail M."/>
            <person name="Willey D."/>
            <person name="Hunt A."/>
            <person name="Burton J."/>
            <person name="Sims S."/>
            <person name="McLay K."/>
            <person name="Plumb B."/>
            <person name="Davis J."/>
            <person name="Clee C."/>
            <person name="Oliver K."/>
            <person name="Clark R."/>
            <person name="Riddle C."/>
            <person name="Elliot D."/>
            <person name="Threadgold G."/>
            <person name="Harden G."/>
            <person name="Ware D."/>
            <person name="Begum S."/>
            <person name="Mortimore B."/>
            <person name="Kerry G."/>
            <person name="Heath P."/>
            <person name="Phillimore B."/>
            <person name="Tracey A."/>
            <person name="Corby N."/>
            <person name="Dunn M."/>
            <person name="Johnson C."/>
            <person name="Wood J."/>
            <person name="Clark S."/>
            <person name="Pelan S."/>
            <person name="Griffiths G."/>
            <person name="Smith M."/>
            <person name="Glithero R."/>
            <person name="Howden P."/>
            <person name="Barker N."/>
            <person name="Lloyd C."/>
            <person name="Stevens C."/>
            <person name="Harley J."/>
            <person name="Holt K."/>
            <person name="Panagiotidis G."/>
            <person name="Lovell J."/>
            <person name="Beasley H."/>
            <person name="Henderson C."/>
            <person name="Gordon D."/>
            <person name="Auger K."/>
            <person name="Wright D."/>
            <person name="Collins J."/>
            <person name="Raisen C."/>
            <person name="Dyer L."/>
            <person name="Leung K."/>
            <person name="Robertson L."/>
            <person name="Ambridge K."/>
            <person name="Leongamornlert D."/>
            <person name="McGuire S."/>
            <person name="Gilderthorp R."/>
            <person name="Griffiths C."/>
            <person name="Manthravadi D."/>
            <person name="Nichol S."/>
            <person name="Barker G."/>
            <person name="Whitehead S."/>
            <person name="Kay M."/>
            <person name="Brown J."/>
            <person name="Murnane C."/>
            <person name="Gray E."/>
            <person name="Humphries M."/>
            <person name="Sycamore N."/>
            <person name="Barker D."/>
            <person name="Saunders D."/>
            <person name="Wallis J."/>
            <person name="Babbage A."/>
            <person name="Hammond S."/>
            <person name="Mashreghi-Mohammadi M."/>
            <person name="Barr L."/>
            <person name="Martin S."/>
            <person name="Wray P."/>
            <person name="Ellington A."/>
            <person name="Matthews N."/>
            <person name="Ellwood M."/>
            <person name="Woodmansey R."/>
            <person name="Clark G."/>
            <person name="Cooper J."/>
            <person name="Tromans A."/>
            <person name="Grafham D."/>
            <person name="Skuce C."/>
            <person name="Pandian R."/>
            <person name="Andrews R."/>
            <person name="Harrison E."/>
            <person name="Kimberley A."/>
            <person name="Garnett J."/>
            <person name="Fosker N."/>
            <person name="Hall R."/>
            <person name="Garner P."/>
            <person name="Kelly D."/>
            <person name="Bird C."/>
            <person name="Palmer S."/>
            <person name="Gehring I."/>
            <person name="Berger A."/>
            <person name="Dooley C.M."/>
            <person name="Ersan-Urun Z."/>
            <person name="Eser C."/>
            <person name="Geiger H."/>
            <person name="Geisler M."/>
            <person name="Karotki L."/>
            <person name="Kirn A."/>
            <person name="Konantz J."/>
            <person name="Konantz M."/>
            <person name="Oberlander M."/>
            <person name="Rudolph-Geiger S."/>
            <person name="Teucke M."/>
            <person name="Lanz C."/>
            <person name="Raddatz G."/>
            <person name="Osoegawa K."/>
            <person name="Zhu B."/>
            <person name="Rapp A."/>
            <person name="Widaa S."/>
            <person name="Langford C."/>
            <person name="Yang F."/>
            <person name="Schuster S.C."/>
            <person name="Carter N.P."/>
            <person name="Harrow J."/>
            <person name="Ning Z."/>
            <person name="Herrero J."/>
            <person name="Searle S.M."/>
            <person name="Enright A."/>
            <person name="Geisler R."/>
            <person name="Plasterk R.H."/>
            <person name="Lee C."/>
            <person name="Westerfield M."/>
            <person name="de Jong P.J."/>
            <person name="Zon L.I."/>
            <person name="Postlethwait J.H."/>
            <person name="Nusslein-Volhard C."/>
            <person name="Hubbard T.J."/>
            <person name="Roest Crollius H."/>
            <person name="Rogers J."/>
            <person name="Stemple D.L."/>
        </authorList>
    </citation>
    <scope>NUCLEOTIDE SEQUENCE [LARGE SCALE GENOMIC DNA]</scope>
    <source>
        <strain>Tuebingen</strain>
    </source>
</reference>
<reference key="2">
    <citation type="submission" date="2004-07" db="EMBL/GenBank/DDBJ databases">
        <authorList>
            <consortium name="NIH - Zebrafish Gene Collection (ZGC) project"/>
        </authorList>
    </citation>
    <scope>NUCLEOTIDE SEQUENCE [LARGE SCALE MRNA] (ISOFORM 2)</scope>
</reference>
<reference key="3">
    <citation type="journal article" date="2014" name="Nature">
        <title>Haematopoietic stem cell induction by somite-derived endothelial cells controlled by meox1.</title>
        <authorList>
            <person name="Nguyen P.D."/>
            <person name="Hollway G.E."/>
            <person name="Sonntag C."/>
            <person name="Miles L.B."/>
            <person name="Hall T.E."/>
            <person name="Berger S."/>
            <person name="Fernandez K.J."/>
            <person name="Gurevich D.B."/>
            <person name="Cole N.J."/>
            <person name="Alaei S."/>
            <person name="Ramialison M."/>
            <person name="Sutherland R.L."/>
            <person name="Polo J.M."/>
            <person name="Lieschke G.J."/>
            <person name="Currie P.D."/>
        </authorList>
    </citation>
    <scope>FUNCTION</scope>
    <scope>DISRUPTION PHENOTYPE</scope>
    <scope>DEVELOPMENTAL STAGE</scope>
</reference>
<evidence type="ECO:0000250" key="1">
    <source>
        <dbReference type="UniProtKB" id="P32442"/>
    </source>
</evidence>
<evidence type="ECO:0000250" key="2">
    <source>
        <dbReference type="UniProtKB" id="P50221"/>
    </source>
</evidence>
<evidence type="ECO:0000255" key="3">
    <source>
        <dbReference type="PROSITE-ProRule" id="PRU00108"/>
    </source>
</evidence>
<evidence type="ECO:0000256" key="4">
    <source>
        <dbReference type="SAM" id="MobiDB-lite"/>
    </source>
</evidence>
<evidence type="ECO:0000269" key="5">
    <source>
    </source>
</evidence>
<evidence type="ECO:0000303" key="6">
    <source>
    </source>
</evidence>
<evidence type="ECO:0000312" key="7">
    <source>
        <dbReference type="ZFIN" id="ZDB-GENE-040718-149"/>
    </source>
</evidence>
<keyword id="KW-0010">Activator</keyword>
<keyword id="KW-0025">Alternative splicing</keyword>
<keyword id="KW-0963">Cytoplasm</keyword>
<keyword id="KW-0217">Developmental protein</keyword>
<keyword id="KW-0238">DNA-binding</keyword>
<keyword id="KW-0371">Homeobox</keyword>
<keyword id="KW-0539">Nucleus</keyword>
<keyword id="KW-1185">Reference proteome</keyword>
<keyword id="KW-0678">Repressor</keyword>
<keyword id="KW-0804">Transcription</keyword>
<keyword id="KW-0805">Transcription regulation</keyword>
<protein>
    <recommendedName>
        <fullName evidence="2">Homeobox protein MOX-1</fullName>
    </recommendedName>
    <alternativeName>
        <fullName evidence="2">Mesenchyme homeobox 1</fullName>
    </alternativeName>
    <alternativeName>
        <fullName evidence="6">Protein choker</fullName>
    </alternativeName>
</protein>
<comment type="function">
    <text evidence="5">Mesodermal transcription factor that plays a key role in somitogenesis and is specifically required for sclerotome development. Required for maintenance of the sclerotome polarity and formation of the cranio-cervical joints. Binds specifically to the promoter of target genes and regulates their expression. Required for hematopoietic stem cell (HSCs) induction via its role in somitogenesis: specification of HSCs occurs via the deployment of a specific endothelial precursor population, which arises within a sub-compartment of the somite named endotome. Acts by mediating specification of endothelial cells of the endotome within the nascent somite, notably by repressing expression of cxcl12b.</text>
</comment>
<comment type="subcellular location">
    <subcellularLocation>
        <location evidence="1">Nucleus</location>
    </subcellularLocation>
    <subcellularLocation>
        <location evidence="1">Cytoplasm</location>
    </subcellularLocation>
    <text evidence="1">Localizes predominantly in the nucleus.</text>
</comment>
<comment type="alternative products">
    <event type="alternative splicing"/>
    <isoform>
        <id>F1Q4R9-1</id>
        <name>1</name>
        <sequence type="displayed"/>
    </isoform>
    <isoform>
        <id>F1Q4R9-2</id>
        <name>2</name>
        <sequence type="described" ref="VSP_057099"/>
    </isoform>
</comment>
<comment type="developmental stage">
    <text evidence="5">Expressed within the early somite and then becomes restricted to the external cell layer (ECL) and consequently to appendicular muscle populations.</text>
</comment>
<comment type="disruption phenotype">
    <text evidence="5">Defects in somite lineages. Secondary trunk myogenesis is reduced, as well as appendicular and hypaxial muscles and their progenitors. These cell types derive from the external cell layer (ECL) and ECL cell numbers are reduced. The endotome is expanded at the expense of a second somitic cell type. The resulting increase in endotome-derived cells that migrate to colonize the dorsal aorta generates a dramatic increase in chemokine-dependent hematopoietic stem cell (HSCs) induction.</text>
</comment>
<gene>
    <name evidence="7" type="primary">meox1</name>
    <name evidence="6" type="synonym">cho</name>
</gene>
<accession>F1Q4R9</accession>
<accession>Q6DHF3</accession>
<name>MEOX1_DANRE</name>
<organism>
    <name type="scientific">Danio rerio</name>
    <name type="common">Zebrafish</name>
    <name type="synonym">Brachydanio rerio</name>
    <dbReference type="NCBI Taxonomy" id="7955"/>
    <lineage>
        <taxon>Eukaryota</taxon>
        <taxon>Metazoa</taxon>
        <taxon>Chordata</taxon>
        <taxon>Craniata</taxon>
        <taxon>Vertebrata</taxon>
        <taxon>Euteleostomi</taxon>
        <taxon>Actinopterygii</taxon>
        <taxon>Neopterygii</taxon>
        <taxon>Teleostei</taxon>
        <taxon>Ostariophysi</taxon>
        <taxon>Cypriniformes</taxon>
        <taxon>Danionidae</taxon>
        <taxon>Danioninae</taxon>
        <taxon>Danio</taxon>
    </lineage>
</organism>
<proteinExistence type="evidence at transcript level"/>
<dbReference type="EMBL" id="CR847827">
    <property type="status" value="NOT_ANNOTATED_CDS"/>
    <property type="molecule type" value="Genomic_DNA"/>
</dbReference>
<dbReference type="EMBL" id="BC076021">
    <property type="protein sequence ID" value="AAH76021.1"/>
    <property type="molecule type" value="mRNA"/>
</dbReference>
<dbReference type="RefSeq" id="NP_001002450.2">
    <molecule id="F1Q4R9-1"/>
    <property type="nucleotide sequence ID" value="NM_001002450.2"/>
</dbReference>
<dbReference type="SMR" id="F1Q4R9"/>
<dbReference type="FunCoup" id="F1Q4R9">
    <property type="interactions" value="885"/>
</dbReference>
<dbReference type="STRING" id="7955.ENSDARP00000096438"/>
<dbReference type="PaxDb" id="7955-ENSDARP00000096438"/>
<dbReference type="Ensembl" id="ENSDART00000011252">
    <molecule id="F1Q4R9-1"/>
    <property type="protein sequence ID" value="ENSDARP00000027691"/>
    <property type="gene ID" value="ENSDARG00000115382"/>
</dbReference>
<dbReference type="Ensembl" id="ENSDART00000105661">
    <molecule id="F1Q4R9-1"/>
    <property type="protein sequence ID" value="ENSDARP00000096438"/>
    <property type="gene ID" value="ENSDARG00000007891"/>
</dbReference>
<dbReference type="GeneID" id="436723"/>
<dbReference type="KEGG" id="dre:436723"/>
<dbReference type="AGR" id="ZFIN:ZDB-GENE-040718-149"/>
<dbReference type="CTD" id="4222"/>
<dbReference type="ZFIN" id="ZDB-GENE-040718-149">
    <property type="gene designation" value="meox1"/>
</dbReference>
<dbReference type="eggNOG" id="KOG0489">
    <property type="taxonomic scope" value="Eukaryota"/>
</dbReference>
<dbReference type="HOGENOM" id="CLU_081326_1_0_1"/>
<dbReference type="InParanoid" id="F1Q4R9"/>
<dbReference type="OMA" id="HAPSILW"/>
<dbReference type="OrthoDB" id="6159439at2759"/>
<dbReference type="PhylomeDB" id="F1Q4R9"/>
<dbReference type="TreeFam" id="TF351603"/>
<dbReference type="PRO" id="PR:F1Q4R9"/>
<dbReference type="Proteomes" id="UP000000437">
    <property type="component" value="Alternate scaffold 12"/>
</dbReference>
<dbReference type="Proteomes" id="UP000000437">
    <property type="component" value="Chromosome 12"/>
</dbReference>
<dbReference type="Bgee" id="ENSDARG00000007891">
    <property type="expression patterns" value="Expressed in muscle tissue and 8 other cell types or tissues"/>
</dbReference>
<dbReference type="GO" id="GO:0005737">
    <property type="term" value="C:cytoplasm"/>
    <property type="evidence" value="ECO:0000250"/>
    <property type="project" value="UniProtKB"/>
</dbReference>
<dbReference type="GO" id="GO:0005634">
    <property type="term" value="C:nucleus"/>
    <property type="evidence" value="ECO:0000314"/>
    <property type="project" value="ZFIN"/>
</dbReference>
<dbReference type="GO" id="GO:0003682">
    <property type="term" value="F:chromatin binding"/>
    <property type="evidence" value="ECO:0000314"/>
    <property type="project" value="ZFIN"/>
</dbReference>
<dbReference type="GO" id="GO:0003700">
    <property type="term" value="F:DNA-binding transcription factor activity"/>
    <property type="evidence" value="ECO:0000314"/>
    <property type="project" value="UniProtKB"/>
</dbReference>
<dbReference type="GO" id="GO:0000981">
    <property type="term" value="F:DNA-binding transcription factor activity, RNA polymerase II-specific"/>
    <property type="evidence" value="ECO:0000318"/>
    <property type="project" value="GO_Central"/>
</dbReference>
<dbReference type="GO" id="GO:0000978">
    <property type="term" value="F:RNA polymerase II cis-regulatory region sequence-specific DNA binding"/>
    <property type="evidence" value="ECO:0000318"/>
    <property type="project" value="GO_Central"/>
</dbReference>
<dbReference type="GO" id="GO:0043565">
    <property type="term" value="F:sequence-specific DNA binding"/>
    <property type="evidence" value="ECO:0000314"/>
    <property type="project" value="UniProtKB"/>
</dbReference>
<dbReference type="GO" id="GO:0048066">
    <property type="term" value="P:developmental pigmentation"/>
    <property type="evidence" value="ECO:0000315"/>
    <property type="project" value="ZFIN"/>
</dbReference>
<dbReference type="GO" id="GO:0060218">
    <property type="term" value="P:hematopoietic stem cell differentiation"/>
    <property type="evidence" value="ECO:0000315"/>
    <property type="project" value="UniProtKB"/>
</dbReference>
<dbReference type="GO" id="GO:0030097">
    <property type="term" value="P:hemopoiesis"/>
    <property type="evidence" value="ECO:0000315"/>
    <property type="project" value="ZFIN"/>
</dbReference>
<dbReference type="GO" id="GO:0055001">
    <property type="term" value="P:muscle cell development"/>
    <property type="evidence" value="ECO:0000315"/>
    <property type="project" value="ZFIN"/>
</dbReference>
<dbReference type="GO" id="GO:0045944">
    <property type="term" value="P:positive regulation of transcription by RNA polymerase II"/>
    <property type="evidence" value="ECO:0007669"/>
    <property type="project" value="InterPro"/>
</dbReference>
<dbReference type="GO" id="GO:0006357">
    <property type="term" value="P:regulation of transcription by RNA polymerase II"/>
    <property type="evidence" value="ECO:0000318"/>
    <property type="project" value="GO_Central"/>
</dbReference>
<dbReference type="GO" id="GO:0061056">
    <property type="term" value="P:sclerotome development"/>
    <property type="evidence" value="ECO:0000250"/>
    <property type="project" value="UniProtKB"/>
</dbReference>
<dbReference type="GO" id="GO:0001501">
    <property type="term" value="P:skeletal system development"/>
    <property type="evidence" value="ECO:0000315"/>
    <property type="project" value="ZFIN"/>
</dbReference>
<dbReference type="GO" id="GO:0061053">
    <property type="term" value="P:somite development"/>
    <property type="evidence" value="ECO:0000315"/>
    <property type="project" value="UniProtKB"/>
</dbReference>
<dbReference type="CDD" id="cd00086">
    <property type="entry name" value="homeodomain"/>
    <property type="match status" value="1"/>
</dbReference>
<dbReference type="FunFam" id="1.10.10.60:FF:000109">
    <property type="entry name" value="Homeobox protein MOX-2"/>
    <property type="match status" value="1"/>
</dbReference>
<dbReference type="Gene3D" id="1.10.10.60">
    <property type="entry name" value="Homeodomain-like"/>
    <property type="match status" value="1"/>
</dbReference>
<dbReference type="InterPro" id="IPR001356">
    <property type="entry name" value="HD"/>
</dbReference>
<dbReference type="InterPro" id="IPR020479">
    <property type="entry name" value="HD_metazoa"/>
</dbReference>
<dbReference type="InterPro" id="IPR017970">
    <property type="entry name" value="Homeobox_CS"/>
</dbReference>
<dbReference type="InterPro" id="IPR009057">
    <property type="entry name" value="Homeodomain-like_sf"/>
</dbReference>
<dbReference type="InterPro" id="IPR042634">
    <property type="entry name" value="MOX-1/MOX-2"/>
</dbReference>
<dbReference type="PANTHER" id="PTHR24328">
    <property type="entry name" value="HOMEOBOX PROTEIN MOX"/>
    <property type="match status" value="1"/>
</dbReference>
<dbReference type="PANTHER" id="PTHR24328:SF8">
    <property type="entry name" value="HOMEOBOX PROTEIN MOX-1"/>
    <property type="match status" value="1"/>
</dbReference>
<dbReference type="Pfam" id="PF00046">
    <property type="entry name" value="Homeodomain"/>
    <property type="match status" value="1"/>
</dbReference>
<dbReference type="PRINTS" id="PR00024">
    <property type="entry name" value="HOMEOBOX"/>
</dbReference>
<dbReference type="SMART" id="SM00389">
    <property type="entry name" value="HOX"/>
    <property type="match status" value="1"/>
</dbReference>
<dbReference type="SUPFAM" id="SSF46689">
    <property type="entry name" value="Homeodomain-like"/>
    <property type="match status" value="1"/>
</dbReference>
<dbReference type="PROSITE" id="PS00027">
    <property type="entry name" value="HOMEOBOX_1"/>
    <property type="match status" value="1"/>
</dbReference>
<dbReference type="PROSITE" id="PS50071">
    <property type="entry name" value="HOMEOBOX_2"/>
    <property type="match status" value="1"/>
</dbReference>
<sequence>MEQSASSCMRSPHTGGALWGCVRSPHSGGSGAGIQPYQQAPFALHQKHDFLAYTDFSSSCLVPAPHAYPREDRLYPETHSGYQRTEWQFSPCEPRGRGQEPCQGAAEAVGAEMDSAGGDRLAGAVTGCLEGDYSPQSVPAVDTEKKSSKRKREVTDIQDSSFKADSNCKARKERTAFTKEQLRELEAEFTHHNYLTRLRRYEIAVNLDLTERQVKVWFQNRRMKWKRVKGGQPASPHDLEADELDSAASPSSE</sequence>
<feature type="chain" id="PRO_0000430816" description="Homeobox protein MOX-1">
    <location>
        <begin position="1"/>
        <end position="253"/>
    </location>
</feature>
<feature type="DNA-binding region" description="Homeobox" evidence="3">
    <location>
        <begin position="170"/>
        <end position="229"/>
    </location>
</feature>
<feature type="region of interest" description="Disordered" evidence="4">
    <location>
        <begin position="136"/>
        <end position="158"/>
    </location>
</feature>
<feature type="region of interest" description="Disordered" evidence="4">
    <location>
        <begin position="226"/>
        <end position="253"/>
    </location>
</feature>
<feature type="splice variant" id="VSP_057099" description="In isoform 2.">
    <location>
        <begin position="15"/>
        <end position="27"/>
    </location>
</feature>